<dbReference type="EC" id="3.6.1.-" evidence="1"/>
<dbReference type="EMBL" id="CP000133">
    <property type="protein sequence ID" value="ABC88836.1"/>
    <property type="molecule type" value="Genomic_DNA"/>
</dbReference>
<dbReference type="RefSeq" id="WP_011423408.1">
    <property type="nucleotide sequence ID" value="NC_007761.1"/>
</dbReference>
<dbReference type="SMR" id="Q2KEA0"/>
<dbReference type="KEGG" id="ret:RHE_CH00002"/>
<dbReference type="eggNOG" id="COG0424">
    <property type="taxonomic scope" value="Bacteria"/>
</dbReference>
<dbReference type="HOGENOM" id="CLU_040416_1_1_5"/>
<dbReference type="OrthoDB" id="9813962at2"/>
<dbReference type="Proteomes" id="UP000001936">
    <property type="component" value="Chromosome"/>
</dbReference>
<dbReference type="GO" id="GO:0005737">
    <property type="term" value="C:cytoplasm"/>
    <property type="evidence" value="ECO:0007669"/>
    <property type="project" value="UniProtKB-SubCell"/>
</dbReference>
<dbReference type="GO" id="GO:0047429">
    <property type="term" value="F:nucleoside triphosphate diphosphatase activity"/>
    <property type="evidence" value="ECO:0007669"/>
    <property type="project" value="InterPro"/>
</dbReference>
<dbReference type="GO" id="GO:0009117">
    <property type="term" value="P:nucleotide metabolic process"/>
    <property type="evidence" value="ECO:0007669"/>
    <property type="project" value="UniProtKB-KW"/>
</dbReference>
<dbReference type="CDD" id="cd00555">
    <property type="entry name" value="Maf"/>
    <property type="match status" value="1"/>
</dbReference>
<dbReference type="Gene3D" id="3.90.950.10">
    <property type="match status" value="1"/>
</dbReference>
<dbReference type="HAMAP" id="MF_00528">
    <property type="entry name" value="Maf"/>
    <property type="match status" value="1"/>
</dbReference>
<dbReference type="InterPro" id="IPR029001">
    <property type="entry name" value="ITPase-like_fam"/>
</dbReference>
<dbReference type="InterPro" id="IPR003697">
    <property type="entry name" value="Maf-like"/>
</dbReference>
<dbReference type="NCBIfam" id="NF002690">
    <property type="entry name" value="PRK02478.1"/>
    <property type="match status" value="1"/>
</dbReference>
<dbReference type="PANTHER" id="PTHR43213">
    <property type="entry name" value="BIFUNCTIONAL DTTP/UTP PYROPHOSPHATASE/METHYLTRANSFERASE PROTEIN-RELATED"/>
    <property type="match status" value="1"/>
</dbReference>
<dbReference type="PANTHER" id="PTHR43213:SF5">
    <property type="entry name" value="BIFUNCTIONAL DTTP_UTP PYROPHOSPHATASE_METHYLTRANSFERASE PROTEIN-RELATED"/>
    <property type="match status" value="1"/>
</dbReference>
<dbReference type="Pfam" id="PF02545">
    <property type="entry name" value="Maf"/>
    <property type="match status" value="1"/>
</dbReference>
<dbReference type="PIRSF" id="PIRSF006305">
    <property type="entry name" value="Maf"/>
    <property type="match status" value="1"/>
</dbReference>
<dbReference type="SUPFAM" id="SSF52972">
    <property type="entry name" value="ITPase-like"/>
    <property type="match status" value="1"/>
</dbReference>
<reference key="1">
    <citation type="journal article" date="2006" name="Proc. Natl. Acad. Sci. U.S.A.">
        <title>The partitioned Rhizobium etli genome: genetic and metabolic redundancy in seven interacting replicons.</title>
        <authorList>
            <person name="Gonzalez V."/>
            <person name="Santamaria R.I."/>
            <person name="Bustos P."/>
            <person name="Hernandez-Gonzalez I."/>
            <person name="Medrano-Soto A."/>
            <person name="Moreno-Hagelsieb G."/>
            <person name="Janga S.C."/>
            <person name="Ramirez M.A."/>
            <person name="Jimenez-Jacinto V."/>
            <person name="Collado-Vides J."/>
            <person name="Davila G."/>
        </authorList>
    </citation>
    <scope>NUCLEOTIDE SEQUENCE [LARGE SCALE GENOMIC DNA]</scope>
    <source>
        <strain>ATCC 51251 / DSM 11541 / JCM 21823 / NBRC 15573 / CFN 42</strain>
    </source>
</reference>
<gene>
    <name type="ordered locus">RHE_CH00002</name>
</gene>
<feature type="chain" id="PRO_0000267391" description="7-methyl-GTP pyrophosphatase">
    <location>
        <begin position="1"/>
        <end position="199"/>
    </location>
</feature>
<feature type="active site" description="Proton acceptor" evidence="1">
    <location>
        <position position="76"/>
    </location>
</feature>
<feature type="site" description="Important for substrate specificity" evidence="1">
    <location>
        <position position="13"/>
    </location>
</feature>
<feature type="site" description="Important for substrate specificity" evidence="1">
    <location>
        <position position="77"/>
    </location>
</feature>
<feature type="site" description="Important for substrate specificity" evidence="1">
    <location>
        <position position="162"/>
    </location>
</feature>
<evidence type="ECO:0000255" key="1">
    <source>
        <dbReference type="HAMAP-Rule" id="MF_00528"/>
    </source>
</evidence>
<organism>
    <name type="scientific">Rhizobium etli (strain ATCC 51251 / DSM 11541 / JCM 21823 / NBRC 15573 / CFN 42)</name>
    <dbReference type="NCBI Taxonomy" id="347834"/>
    <lineage>
        <taxon>Bacteria</taxon>
        <taxon>Pseudomonadati</taxon>
        <taxon>Pseudomonadota</taxon>
        <taxon>Alphaproteobacteria</taxon>
        <taxon>Hyphomicrobiales</taxon>
        <taxon>Rhizobiaceae</taxon>
        <taxon>Rhizobium/Agrobacterium group</taxon>
        <taxon>Rhizobium</taxon>
    </lineage>
</organism>
<accession>Q2KEA0</accession>
<proteinExistence type="inferred from homology"/>
<name>NTPPB_RHIEC</name>
<sequence>MTPKLILASSSPFRRMLMENAGLFFEAHPAEIDERAVEAPLEKAGAKPDTVACVLAKAKAEDVSARFPESLVIGSDQTMSLGDRVFHKPKDIADAANHLRALSGTTHRLNSAIVLVRDGAVLWEHVGHAELTMRPLTEDFIARHLSRVGERALSSVGAYQLEGEGVQLFEKIEGDYFTILGLPMLPLLGKLRELGTIDG</sequence>
<keyword id="KW-0963">Cytoplasm</keyword>
<keyword id="KW-0378">Hydrolase</keyword>
<keyword id="KW-0546">Nucleotide metabolism</keyword>
<keyword id="KW-1185">Reference proteome</keyword>
<comment type="function">
    <text evidence="1">Nucleoside triphosphate pyrophosphatase that hydrolyzes 7-methyl-GTP (m(7)GTP). May have a dual role in cell division arrest and in preventing the incorporation of modified nucleotides into cellular nucleic acids.</text>
</comment>
<comment type="catalytic activity">
    <reaction evidence="1">
        <text>N(7)-methyl-GTP + H2O = N(7)-methyl-GMP + diphosphate + H(+)</text>
        <dbReference type="Rhea" id="RHEA:58744"/>
        <dbReference type="ChEBI" id="CHEBI:15377"/>
        <dbReference type="ChEBI" id="CHEBI:15378"/>
        <dbReference type="ChEBI" id="CHEBI:33019"/>
        <dbReference type="ChEBI" id="CHEBI:58285"/>
        <dbReference type="ChEBI" id="CHEBI:87133"/>
    </reaction>
</comment>
<comment type="cofactor">
    <cofactor evidence="1">
        <name>a divalent metal cation</name>
        <dbReference type="ChEBI" id="CHEBI:60240"/>
    </cofactor>
</comment>
<comment type="subcellular location">
    <subcellularLocation>
        <location evidence="1">Cytoplasm</location>
    </subcellularLocation>
</comment>
<comment type="similarity">
    <text evidence="1">Belongs to the Maf family. YceF subfamily.</text>
</comment>
<protein>
    <recommendedName>
        <fullName evidence="1">7-methyl-GTP pyrophosphatase</fullName>
        <shortName evidence="1">m(7)GTP pyrophosphatase</shortName>
        <ecNumber evidence="1">3.6.1.-</ecNumber>
    </recommendedName>
</protein>